<accession>Q29000</accession>
<accession>Q28951</accession>
<dbReference type="EC" id="2.7.10.1"/>
<dbReference type="EMBL" id="U58370">
    <property type="protein sequence ID" value="AAB02578.1"/>
    <property type="molecule type" value="mRNA"/>
</dbReference>
<dbReference type="EMBL" id="U15445">
    <property type="protein sequence ID" value="AAB49731.1"/>
    <property type="molecule type" value="mRNA"/>
</dbReference>
<dbReference type="SMR" id="Q29000"/>
<dbReference type="GlyCosmos" id="Q29000">
    <property type="glycosylation" value="2 sites, No reported glycans"/>
</dbReference>
<dbReference type="GlyGen" id="Q29000">
    <property type="glycosylation" value="2 sites"/>
</dbReference>
<dbReference type="PeptideAtlas" id="Q29000"/>
<dbReference type="eggNOG" id="KOG4258">
    <property type="taxonomic scope" value="Eukaryota"/>
</dbReference>
<dbReference type="InParanoid" id="Q29000"/>
<dbReference type="Proteomes" id="UP000008227">
    <property type="component" value="Unplaced"/>
</dbReference>
<dbReference type="Proteomes" id="UP000314985">
    <property type="component" value="Unplaced"/>
</dbReference>
<dbReference type="Proteomes" id="UP000694570">
    <property type="component" value="Unplaced"/>
</dbReference>
<dbReference type="Proteomes" id="UP000694571">
    <property type="component" value="Unplaced"/>
</dbReference>
<dbReference type="Proteomes" id="UP000694720">
    <property type="component" value="Unplaced"/>
</dbReference>
<dbReference type="Proteomes" id="UP000694722">
    <property type="component" value="Unplaced"/>
</dbReference>
<dbReference type="Proteomes" id="UP000694723">
    <property type="component" value="Unplaced"/>
</dbReference>
<dbReference type="Proteomes" id="UP000694724">
    <property type="component" value="Unplaced"/>
</dbReference>
<dbReference type="Proteomes" id="UP000694725">
    <property type="component" value="Unplaced"/>
</dbReference>
<dbReference type="Proteomes" id="UP000694726">
    <property type="component" value="Unplaced"/>
</dbReference>
<dbReference type="Proteomes" id="UP000694727">
    <property type="component" value="Unplaced"/>
</dbReference>
<dbReference type="Proteomes" id="UP000694728">
    <property type="component" value="Unplaced"/>
</dbReference>
<dbReference type="GO" id="GO:0005886">
    <property type="term" value="C:plasma membrane"/>
    <property type="evidence" value="ECO:0007669"/>
    <property type="project" value="UniProtKB-SubCell"/>
</dbReference>
<dbReference type="GO" id="GO:0005524">
    <property type="term" value="F:ATP binding"/>
    <property type="evidence" value="ECO:0007669"/>
    <property type="project" value="UniProtKB-KW"/>
</dbReference>
<dbReference type="GO" id="GO:0004714">
    <property type="term" value="F:transmembrane receptor protein tyrosine kinase activity"/>
    <property type="evidence" value="ECO:0007669"/>
    <property type="project" value="UniProtKB-EC"/>
</dbReference>
<dbReference type="GO" id="GO:0043066">
    <property type="term" value="P:negative regulation of apoptotic process"/>
    <property type="evidence" value="ECO:0000250"/>
    <property type="project" value="UniProtKB"/>
</dbReference>
<dbReference type="GO" id="GO:0043409">
    <property type="term" value="P:negative regulation of MAPK cascade"/>
    <property type="evidence" value="ECO:0000250"/>
    <property type="project" value="UniProtKB"/>
</dbReference>
<dbReference type="GO" id="GO:0046328">
    <property type="term" value="P:regulation of JNK cascade"/>
    <property type="evidence" value="ECO:0000250"/>
    <property type="project" value="UniProtKB"/>
</dbReference>
<dbReference type="CDD" id="cd00063">
    <property type="entry name" value="FN3"/>
    <property type="match status" value="1"/>
</dbReference>
<dbReference type="FunFam" id="2.60.40.10:FF:002810">
    <property type="entry name" value="Insulin-like growth factor 1 receptor"/>
    <property type="match status" value="1"/>
</dbReference>
<dbReference type="Gene3D" id="2.60.40.10">
    <property type="entry name" value="Immunoglobulins"/>
    <property type="match status" value="2"/>
</dbReference>
<dbReference type="Gene3D" id="1.10.510.10">
    <property type="entry name" value="Transferase(Phosphotransferase) domain 1"/>
    <property type="match status" value="1"/>
</dbReference>
<dbReference type="InterPro" id="IPR050449">
    <property type="entry name" value="Ephrin_rcpt_TKs"/>
</dbReference>
<dbReference type="InterPro" id="IPR003961">
    <property type="entry name" value="FN3_dom"/>
</dbReference>
<dbReference type="InterPro" id="IPR036116">
    <property type="entry name" value="FN3_sf"/>
</dbReference>
<dbReference type="InterPro" id="IPR013783">
    <property type="entry name" value="Ig-like_fold"/>
</dbReference>
<dbReference type="InterPro" id="IPR011009">
    <property type="entry name" value="Kinase-like_dom_sf"/>
</dbReference>
<dbReference type="PANTHER" id="PTHR46877">
    <property type="entry name" value="EPH RECEPTOR A5"/>
    <property type="match status" value="1"/>
</dbReference>
<dbReference type="PANTHER" id="PTHR46877:SF14">
    <property type="entry name" value="RECEPTOR PROTEIN-TYROSINE KINASE"/>
    <property type="match status" value="1"/>
</dbReference>
<dbReference type="Pfam" id="PF00041">
    <property type="entry name" value="fn3"/>
    <property type="match status" value="1"/>
</dbReference>
<dbReference type="SMART" id="SM00060">
    <property type="entry name" value="FN3"/>
    <property type="match status" value="1"/>
</dbReference>
<dbReference type="SUPFAM" id="SSF49265">
    <property type="entry name" value="Fibronectin type III"/>
    <property type="match status" value="1"/>
</dbReference>
<dbReference type="SUPFAM" id="SSF56112">
    <property type="entry name" value="Protein kinase-like (PK-like)"/>
    <property type="match status" value="1"/>
</dbReference>
<dbReference type="PROSITE" id="PS50853">
    <property type="entry name" value="FN3"/>
    <property type="match status" value="2"/>
</dbReference>
<proteinExistence type="evidence at transcript level"/>
<organism>
    <name type="scientific">Sus scrofa</name>
    <name type="common">Pig</name>
    <dbReference type="NCBI Taxonomy" id="9823"/>
    <lineage>
        <taxon>Eukaryota</taxon>
        <taxon>Metazoa</taxon>
        <taxon>Chordata</taxon>
        <taxon>Craniata</taxon>
        <taxon>Vertebrata</taxon>
        <taxon>Euteleostomi</taxon>
        <taxon>Mammalia</taxon>
        <taxon>Eutheria</taxon>
        <taxon>Laurasiatheria</taxon>
        <taxon>Artiodactyla</taxon>
        <taxon>Suina</taxon>
        <taxon>Suidae</taxon>
        <taxon>Sus</taxon>
    </lineage>
</organism>
<protein>
    <recommendedName>
        <fullName>Insulin-like growth factor 1 receptor</fullName>
        <ecNumber>2.7.10.1</ecNumber>
    </recommendedName>
    <alternativeName>
        <fullName>Insulin-like growth factor I receptor</fullName>
        <shortName>IGF-I receptor</shortName>
    </alternativeName>
    <cdAntigenName>CD221</cdAntigenName>
</protein>
<reference key="1">
    <citation type="submission" date="1996-06" db="EMBL/GenBank/DDBJ databases">
        <authorList>
            <person name="Matteri R.L."/>
            <person name="Anderson J.E."/>
            <person name="Prather R.S."/>
        </authorList>
    </citation>
    <scope>NUCLEOTIDE SEQUENCE [MRNA] OF 1-186</scope>
    <source>
        <tissue>Skeletal muscle</tissue>
    </source>
</reference>
<reference key="2">
    <citation type="journal article" date="1995" name="Endocrinology">
        <title>Developmental regulation of steroidogenic enzyme gene expression in the periimplantation porcine conceptus: a paracrine role for insulin-like growth factor-I.</title>
        <authorList>
            <person name="Green M.L."/>
            <person name="Simmen R.C.M."/>
            <person name="Simmen F.A."/>
        </authorList>
    </citation>
    <scope>NUCLEOTIDE SEQUENCE [MRNA] OF 187-304</scope>
    <source>
        <tissue>Conceptus membrane</tissue>
    </source>
</reference>
<gene>
    <name type="primary">IGF1R</name>
</gene>
<feature type="chain" id="PRO_0000058926" description="Insulin-like growth factor 1 receptor">
    <location>
        <begin position="1" status="less than"/>
        <end position="304" status="greater than"/>
    </location>
</feature>
<feature type="topological domain" description="Extracellular" evidence="4">
    <location>
        <begin position="1" status="less than"/>
        <end position="147"/>
    </location>
</feature>
<feature type="transmembrane region" description="Helical" evidence="4">
    <location>
        <begin position="148"/>
        <end position="168"/>
    </location>
</feature>
<feature type="topological domain" description="Cytoplasmic" evidence="4">
    <location>
        <begin position="169"/>
        <end position="304" status="greater than"/>
    </location>
</feature>
<feature type="domain" description="Fibronectin type-III 1" evidence="6">
    <location>
        <begin position="1" status="less than"/>
        <end position="43"/>
    </location>
</feature>
<feature type="domain" description="Fibronectin type-III 2" evidence="6">
    <location>
        <begin position="49"/>
        <end position="142"/>
    </location>
</feature>
<feature type="region of interest" description="Disordered" evidence="8">
    <location>
        <begin position="231"/>
        <end position="304"/>
    </location>
</feature>
<feature type="compositionally biased region" description="Acidic residues" evidence="8">
    <location>
        <begin position="237"/>
        <end position="246"/>
    </location>
</feature>
<feature type="compositionally biased region" description="Low complexity" evidence="8">
    <location>
        <begin position="247"/>
        <end position="263"/>
    </location>
</feature>
<feature type="compositionally biased region" description="Basic and acidic residues" evidence="8">
    <location>
        <begin position="264"/>
        <end position="273"/>
    </location>
</feature>
<feature type="modified residue" description="Phosphoserine; by GSK3-beta" evidence="3">
    <location>
        <position position="225"/>
    </location>
</feature>
<feature type="modified residue" description="Phosphoserine" evidence="3">
    <location>
        <position position="229"/>
    </location>
</feature>
<feature type="glycosylation site" description="N-linked (GlcNAc...) asparagine" evidence="4">
    <location>
        <position position="115"/>
    </location>
</feature>
<feature type="glycosylation site" description="N-linked (GlcNAc...) asparagine" evidence="4">
    <location>
        <position position="128"/>
    </location>
</feature>
<feature type="non-consecutive residues" evidence="9">
    <location>
        <begin position="186"/>
        <end position="187"/>
    </location>
</feature>
<feature type="non-terminal residue">
    <location>
        <position position="1"/>
    </location>
</feature>
<feature type="non-terminal residue">
    <location>
        <position position="304"/>
    </location>
</feature>
<sequence>ERTVISNLRPFTLYRIDIHSCNHEAEKLGCSASNFVFARTMPAEGADDIPGPVTWEPRPENSIFLKWPEPENPNGLILMYEIKYGSQVEDQRECVSRQEYRKYGGAKLNRLNPGNYTARIQATSLSGNGSWTEPVFFYVQAKTTYENFIHLIIALPVAVLLIVGGLVIMLYVFHRKRNNSRLGNGVMLFELMRMCWQYNPKMRPSFLEIISSIKDEMEPGFREVSFYYSEENKPPEPEELDLEPENMESVPLDPSASSSSLPLPDRHSGHKAENGPGPGVLVLRASFDERQPYAHMNGGRKNER</sequence>
<evidence type="ECO:0000250" key="1"/>
<evidence type="ECO:0000250" key="2">
    <source>
        <dbReference type="UniProtKB" id="P08069"/>
    </source>
</evidence>
<evidence type="ECO:0000250" key="3">
    <source>
        <dbReference type="UniProtKB" id="Q60751"/>
    </source>
</evidence>
<evidence type="ECO:0000255" key="4"/>
<evidence type="ECO:0000255" key="5">
    <source>
        <dbReference type="PROSITE-ProRule" id="PRU00159"/>
    </source>
</evidence>
<evidence type="ECO:0000255" key="6">
    <source>
        <dbReference type="PROSITE-ProRule" id="PRU00316"/>
    </source>
</evidence>
<evidence type="ECO:0000255" key="7">
    <source>
        <dbReference type="PROSITE-ProRule" id="PRU10028"/>
    </source>
</evidence>
<evidence type="ECO:0000256" key="8">
    <source>
        <dbReference type="SAM" id="MobiDB-lite"/>
    </source>
</evidence>
<evidence type="ECO:0000305" key="9"/>
<keyword id="KW-0067">ATP-binding</keyword>
<keyword id="KW-1003">Cell membrane</keyword>
<keyword id="KW-1015">Disulfide bond</keyword>
<keyword id="KW-0325">Glycoprotein</keyword>
<keyword id="KW-0418">Kinase</keyword>
<keyword id="KW-0472">Membrane</keyword>
<keyword id="KW-0547">Nucleotide-binding</keyword>
<keyword id="KW-0597">Phosphoprotein</keyword>
<keyword id="KW-0675">Receptor</keyword>
<keyword id="KW-1185">Reference proteome</keyword>
<keyword id="KW-0677">Repeat</keyword>
<keyword id="KW-0808">Transferase</keyword>
<keyword id="KW-0812">Transmembrane</keyword>
<keyword id="KW-1133">Transmembrane helix</keyword>
<keyword id="KW-0829">Tyrosine-protein kinase</keyword>
<keyword id="KW-0832">Ubl conjugation</keyword>
<name>IGF1R_PIG</name>
<comment type="function">
    <text evidence="1">Receptor tyrosine kinase which mediates actions of insulin-like growth factor 1 (IGF1). Binds IGF1 with high affinity and IGF2 and insulin (INS) with a lower affinity. The activated IGF1R is involved in cell growth and survival control. IGF1R is crucial for tumor transformation and survival of malignant cell. Ligand binding activates the receptor kinase, leading to receptor autophosphorylation, and tyrosines phosphorylation of multiple substrates, that function as signaling adapter proteins including, the insulin-receptor substrates (IRS1/2), Shc and 14-3-3 proteins. Phosphorylation of IRSs proteins lead to the activation of two main signaling pathways: the PI3K-AKT/PKB pathway and the Ras-MAPK pathway. The result of activating the MAPK pathway is increased cellular proliferation, whereas activating the PI3K pathway inhibits apoptosis and stimulates protein synthesis. Phosphorylated IRS1 can activate the 85 kDa regulatory subunit of PI3K (PIK3R1), leading to activation of several downstream substrates, including protein AKT/PKB. AKT phosphorylation, in turn, enhances protein synthesis through mTOR activation and triggers the antiapoptotic effects of IGFIR through phosphorylation and inactivation of BAD. In parallel to PI3K-driven signaling, recruitment of Grb2/SOS by phosphorylated IRS1 or Shc leads to recruitment of Ras and activation of the ras-MAPK pathway. In addition to these two main signaling pathways IGF1R signals also through the Janus kinase/signal transducer and activator of transcription pathway (JAK/STAT). Phosphorylation of JAK proteins can lead to phosphorylation/activation of signal transducers and activators of transcription (STAT) proteins. In particular activation of STAT3, may be essential for the transforming activity of IGF1R. The JAK/STAT pathway activates gene transcription and may be responsible for the transforming activity. JNK kinases can also be activated by the IGF1R. IGF1 exerts inhibiting activities on JNK activation via phosphorylation and inhibition of MAP3K5/ASK1, which is able to directly associate with the IGF1R (By similarity). When present in a hybrid receptor with INSR, binds IGF1 (By similarity).</text>
</comment>
<comment type="catalytic activity">
    <reaction evidence="7">
        <text>L-tyrosyl-[protein] + ATP = O-phospho-L-tyrosyl-[protein] + ADP + H(+)</text>
        <dbReference type="Rhea" id="RHEA:10596"/>
        <dbReference type="Rhea" id="RHEA-COMP:10136"/>
        <dbReference type="Rhea" id="RHEA-COMP:20101"/>
        <dbReference type="ChEBI" id="CHEBI:15378"/>
        <dbReference type="ChEBI" id="CHEBI:30616"/>
        <dbReference type="ChEBI" id="CHEBI:46858"/>
        <dbReference type="ChEBI" id="CHEBI:61978"/>
        <dbReference type="ChEBI" id="CHEBI:456216"/>
        <dbReference type="EC" id="2.7.10.1"/>
    </reaction>
</comment>
<comment type="activity regulation">
    <text evidence="1">Activated by autophosphorylation at tyrosines in the kinase activation loop; phosphorylation at all three tyrosine residues is required for optimal kinase activity. Inhibited by MSC1609119A-1, BMS-754807, PQIP, benzimidazole pyridinone, isoquinolinedione, bis-azaindole, 3-cyanoquinoline, 2,4-bis-arylamino-1,3-pyrimidine, pyrrolopyrimidine, pyrrole-5-carboxaldehyde, picropodophyllin (PPP), tyrphostin derivatives. While most inhibitors bind to the ATP binding pocket, MSC1609119A-1 functions as allosteric inhibitor and binds close to the DFG motif and the activation loop (By similarity).</text>
</comment>
<comment type="subunit">
    <text evidence="2">Tetramer of 2 alpha and 2 beta chains linked by disulfide bonds. The alpha chains contribute to the formation of the ligand-binding domain, while the beta chain carries the kinase domain. Forms a hybrid receptor with INSR, the hybrid is a tetramer consisting of 1 alpha chain and 1 beta chain of INSR and 1 alpha chain and 1 beta chain of IGF1R. Interacts with ARRB1 and ARRB2. Interacts with GRB10. Interacts with RACK1 (By similarity). Interacts with SOCS1, SOCS2 and SOCS3 (By similarity). Interacts with 14-3-3 proteins (By similarity). Interacts with NMD2 (By similarity). Interacts with MAP3K5 (By similarity). Interacts with STAT3. Found in a ternary complex with IGF1 and ITGAV:ITGB3 or ITGA6:ITGB4 (By similarity). Interacts (nascent precursor form) with ZFAND2B (By similarity).</text>
</comment>
<comment type="subcellular location">
    <subcellularLocation>
        <location evidence="1">Cell membrane</location>
        <topology evidence="1">Single-pass type I membrane protein</topology>
    </subcellularLocation>
</comment>
<comment type="PTM">
    <text evidence="2 3">Autophosphorylated on tyrosine residues in response to ligand binding (By similarity). Autophosphorylation occurs in trans, i.e. one subunit of the dimeric receptor phosphorylates tyrosine residues on the other subunit (By similarity). Autophosphorylation occurs in a sequential manner (By similarity). While every single phosphorylation increases kinase activity, all three tyrosine residues in the kinase activation loop have to be phosphorylated for optimal activity (By similarity). Can be autophosphorylated at additional tyrosine residues (in vitro) (By similarity). May also be phosphorylated at tyrosine residues by mTORC2 (By similarity). Autophosphorylated is followed by phosphorylation of juxtamembrane tyrosines and C-terminal serines (By similarity). Phosphorylation of Ser-225 by GSK-3beta restrains kinase activity and promotes cell surface expression, it requires a priming phosphorylation at Ser-229 (By similarity). Dephosphorylated by PTPN1 (By similarity).</text>
</comment>
<comment type="PTM">
    <text evidence="1">Polyubiquitinated in the activation loop through both 'Lys-48' and 'Lys-29' linkages, promoting receptor endocytosis and subsequent degradation by the proteasome. Ubiquitination is facilitated by pre-existing phosphorylation (By similarity).</text>
</comment>
<comment type="PTM">
    <text evidence="1">Sumoylated with SUMO1.</text>
</comment>
<comment type="PTM">
    <text evidence="1">Controlled by regulated intramembrane proteolysis (RIP). Undergoes metalloprotease-dependent constitutive ectodomain shedding to produce a membrane-anchored 52 kDa C-Terminal fragment which is further processed by presenilin gamma-secretase to yield an intracellular 50 kDa fragment (By similarity).</text>
</comment>
<comment type="similarity">
    <text evidence="5">Belongs to the protein kinase superfamily. Tyr protein kinase family. Insulin receptor subfamily.</text>
</comment>